<accession>A3DHD2</accession>
<keyword id="KW-0002">3D-structure</keyword>
<keyword id="KW-0106">Calcium</keyword>
<keyword id="KW-1003">Cell membrane</keyword>
<keyword id="KW-0449">Lipoprotein</keyword>
<keyword id="KW-0472">Membrane</keyword>
<keyword id="KW-0479">Metal-binding</keyword>
<keyword id="KW-0564">Palmitate</keyword>
<keyword id="KW-1185">Reference proteome</keyword>
<keyword id="KW-0732">Signal</keyword>
<evidence type="ECO:0000255" key="1">
    <source>
        <dbReference type="PROSITE-ProRule" id="PRU00303"/>
    </source>
</evidence>
<evidence type="ECO:0000269" key="2">
    <source>
    </source>
</evidence>
<evidence type="ECO:0000303" key="3">
    <source>
    </source>
</evidence>
<evidence type="ECO:0000305" key="4"/>
<evidence type="ECO:0000312" key="5">
    <source>
        <dbReference type="EMBL" id="ABN53361.1"/>
    </source>
</evidence>
<evidence type="ECO:0000312" key="6">
    <source>
        <dbReference type="Proteomes" id="UP000002145"/>
    </source>
</evidence>
<evidence type="ECO:0007744" key="7">
    <source>
        <dbReference type="PDB" id="4PEU"/>
    </source>
</evidence>
<evidence type="ECO:0007744" key="8">
    <source>
        <dbReference type="PDB" id="4PHB"/>
    </source>
</evidence>
<evidence type="ECO:0007829" key="9">
    <source>
        <dbReference type="PDB" id="4PEU"/>
    </source>
</evidence>
<gene>
    <name evidence="5" type="ordered locus">Cthe_2159</name>
</gene>
<dbReference type="EMBL" id="CP000568">
    <property type="protein sequence ID" value="ABN53361.1"/>
    <property type="molecule type" value="Genomic_DNA"/>
</dbReference>
<dbReference type="RefSeq" id="WP_020457724.1">
    <property type="nucleotide sequence ID" value="NC_009012.1"/>
</dbReference>
<dbReference type="PDB" id="4PEU">
    <property type="method" value="X-ray"/>
    <property type="resolution" value="1.80 A"/>
    <property type="chains" value="A=2-286"/>
</dbReference>
<dbReference type="PDB" id="4PHB">
    <property type="method" value="X-ray"/>
    <property type="resolution" value="2.18 A"/>
    <property type="chains" value="A=2-286"/>
</dbReference>
<dbReference type="PDBsum" id="4PEU"/>
<dbReference type="PDBsum" id="4PHB"/>
<dbReference type="SMR" id="A3DHD2"/>
<dbReference type="STRING" id="203119.Cthe_2159"/>
<dbReference type="GeneID" id="35805616"/>
<dbReference type="KEGG" id="cth:Cthe_2159"/>
<dbReference type="eggNOG" id="ENOG502Z8AD">
    <property type="taxonomic scope" value="Bacteria"/>
</dbReference>
<dbReference type="HOGENOM" id="CLU_962080_0_0_9"/>
<dbReference type="OrthoDB" id="9812829at2"/>
<dbReference type="EvolutionaryTrace" id="A3DHD2"/>
<dbReference type="Proteomes" id="UP000002145">
    <property type="component" value="Chromosome"/>
</dbReference>
<dbReference type="GO" id="GO:0005886">
    <property type="term" value="C:plasma membrane"/>
    <property type="evidence" value="ECO:0007669"/>
    <property type="project" value="UniProtKB-SubCell"/>
</dbReference>
<dbReference type="GO" id="GO:0005509">
    <property type="term" value="F:calcium ion binding"/>
    <property type="evidence" value="ECO:0000314"/>
    <property type="project" value="UniProtKB"/>
</dbReference>
<dbReference type="GO" id="GO:0030248">
    <property type="term" value="F:cellulose binding"/>
    <property type="evidence" value="ECO:0000314"/>
    <property type="project" value="UniProtKB"/>
</dbReference>
<dbReference type="GO" id="GO:0048028">
    <property type="term" value="F:galacturonan binding"/>
    <property type="evidence" value="ECO:0000314"/>
    <property type="project" value="UniProtKB"/>
</dbReference>
<dbReference type="GO" id="GO:2001062">
    <property type="term" value="F:xylan binding"/>
    <property type="evidence" value="ECO:0000314"/>
    <property type="project" value="UniProtKB"/>
</dbReference>
<dbReference type="InterPro" id="IPR025584">
    <property type="entry name" value="Cthe_2159"/>
</dbReference>
<dbReference type="Pfam" id="PF14262">
    <property type="entry name" value="Cthe_2159"/>
    <property type="match status" value="1"/>
</dbReference>
<dbReference type="PROSITE" id="PS51257">
    <property type="entry name" value="PROKAR_LIPOPROTEIN"/>
    <property type="match status" value="1"/>
</dbReference>
<name>CBDP_ACET2</name>
<feature type="signal peptide" evidence="1">
    <location>
        <begin position="1"/>
        <end position="20"/>
    </location>
</feature>
<feature type="chain" id="PRO_0000434100" description="Carbohydrate-binding domain-containing protein Cthe_2159" evidence="1">
    <location>
        <begin position="21"/>
        <end position="286"/>
    </location>
</feature>
<feature type="region of interest" description="Polygalacturonic acid-binding" evidence="2">
    <location>
        <begin position="124"/>
        <end position="225"/>
    </location>
</feature>
<feature type="binding site" evidence="2 7">
    <location>
        <position position="152"/>
    </location>
    <ligand>
        <name>Ca(2+)</name>
        <dbReference type="ChEBI" id="CHEBI:29108"/>
        <label>1</label>
    </ligand>
</feature>
<feature type="binding site" evidence="2 7">
    <location>
        <position position="153"/>
    </location>
    <ligand>
        <name>Ca(2+)</name>
        <dbReference type="ChEBI" id="CHEBI:29108"/>
        <label>1</label>
    </ligand>
</feature>
<feature type="binding site" evidence="2 7">
    <location>
        <position position="154"/>
    </location>
    <ligand>
        <name>Ca(2+)</name>
        <dbReference type="ChEBI" id="CHEBI:29108"/>
        <label>2</label>
    </ligand>
</feature>
<feature type="binding site" evidence="2 7">
    <location>
        <position position="177"/>
    </location>
    <ligand>
        <name>Ca(2+)</name>
        <dbReference type="ChEBI" id="CHEBI:29108"/>
        <label>1</label>
    </ligand>
</feature>
<feature type="binding site" evidence="2 7">
    <location>
        <position position="178"/>
    </location>
    <ligand>
        <name>Ca(2+)</name>
        <dbReference type="ChEBI" id="CHEBI:29108"/>
        <label>2</label>
    </ligand>
</feature>
<feature type="binding site" evidence="2 7">
    <location>
        <position position="215"/>
    </location>
    <ligand>
        <name>Ca(2+)</name>
        <dbReference type="ChEBI" id="CHEBI:29108"/>
        <label>3</label>
    </ligand>
</feature>
<feature type="binding site" evidence="2 7">
    <location>
        <position position="243"/>
    </location>
    <ligand>
        <name>Ca(2+)</name>
        <dbReference type="ChEBI" id="CHEBI:29108"/>
        <label>3</label>
    </ligand>
</feature>
<feature type="binding site" evidence="2 7">
    <location>
        <position position="244"/>
    </location>
    <ligand>
        <name>Ca(2+)</name>
        <dbReference type="ChEBI" id="CHEBI:29108"/>
        <label>3</label>
    </ligand>
</feature>
<feature type="binding site" evidence="2 7">
    <location>
        <position position="247"/>
    </location>
    <ligand>
        <name>Ca(2+)</name>
        <dbReference type="ChEBI" id="CHEBI:29108"/>
        <label>3</label>
    </ligand>
</feature>
<feature type="lipid moiety-binding region" description="N-palmitoyl cysteine" evidence="1">
    <location>
        <position position="21"/>
    </location>
</feature>
<feature type="lipid moiety-binding region" description="S-diacylglycerol cysteine" evidence="1">
    <location>
        <position position="21"/>
    </location>
</feature>
<feature type="strand" evidence="9">
    <location>
        <begin position="37"/>
        <end position="46"/>
    </location>
</feature>
<feature type="strand" evidence="9">
    <location>
        <begin position="48"/>
        <end position="50"/>
    </location>
</feature>
<feature type="strand" evidence="9">
    <location>
        <begin position="57"/>
        <end position="59"/>
    </location>
</feature>
<feature type="strand" evidence="9">
    <location>
        <begin position="62"/>
        <end position="65"/>
    </location>
</feature>
<feature type="strand" evidence="9">
    <location>
        <begin position="69"/>
        <end position="79"/>
    </location>
</feature>
<feature type="strand" evidence="9">
    <location>
        <begin position="81"/>
        <end position="85"/>
    </location>
</feature>
<feature type="strand" evidence="9">
    <location>
        <begin position="91"/>
        <end position="102"/>
    </location>
</feature>
<feature type="strand" evidence="9">
    <location>
        <begin position="104"/>
        <end position="106"/>
    </location>
</feature>
<feature type="strand" evidence="9">
    <location>
        <begin position="108"/>
        <end position="113"/>
    </location>
</feature>
<feature type="strand" evidence="9">
    <location>
        <begin position="115"/>
        <end position="121"/>
    </location>
</feature>
<feature type="strand" evidence="9">
    <location>
        <begin position="126"/>
        <end position="130"/>
    </location>
</feature>
<feature type="strand" evidence="9">
    <location>
        <begin position="147"/>
        <end position="167"/>
    </location>
</feature>
<feature type="strand" evidence="9">
    <location>
        <begin position="169"/>
        <end position="181"/>
    </location>
</feature>
<feature type="strand" evidence="9">
    <location>
        <begin position="185"/>
        <end position="192"/>
    </location>
</feature>
<feature type="strand" evidence="9">
    <location>
        <begin position="194"/>
        <end position="203"/>
    </location>
</feature>
<feature type="strand" evidence="9">
    <location>
        <begin position="207"/>
        <end position="214"/>
    </location>
</feature>
<feature type="strand" evidence="9">
    <location>
        <begin position="216"/>
        <end position="218"/>
    </location>
</feature>
<feature type="strand" evidence="9">
    <location>
        <begin position="228"/>
        <end position="232"/>
    </location>
</feature>
<feature type="strand" evidence="9">
    <location>
        <begin position="234"/>
        <end position="243"/>
    </location>
</feature>
<feature type="strand" evidence="9">
    <location>
        <begin position="245"/>
        <end position="254"/>
    </location>
</feature>
<feature type="strand" evidence="9">
    <location>
        <begin position="256"/>
        <end position="265"/>
    </location>
</feature>
<feature type="strand" evidence="9">
    <location>
        <begin position="267"/>
        <end position="276"/>
    </location>
</feature>
<feature type="strand" evidence="9">
    <location>
        <begin position="280"/>
        <end position="283"/>
    </location>
</feature>
<proteinExistence type="evidence at protein level"/>
<sequence length="286" mass="30131">MSIKKLILAASILTTLALTGCGGKGAVQPSGVSTGDVNAKIVFDNDKVNADNVDGLSVSEREVKITKPGMYTFSGTWNDGQILVDIGKEFEAVLVLDGVNITNTKSAPIYIKSAEKVKIELADGKDNVLTDAEFYEFEDPQDNKPNACIYSRDDITIKGNGNLTVNANFNNGIGTSNDLKITGGNITVKAFNNGLKGNDSVTISGGNIDITAEADGIKVENTEEPHKGYVNITGGTIKIRAKDDAIDSVRSVSINNADVKVSVGGKDVKCEGVLNIAEGCLGKLEE</sequence>
<protein>
    <recommendedName>
        <fullName evidence="3 5">Carbohydrate-binding domain-containing protein Cthe_2159</fullName>
    </recommendedName>
    <alternativeName>
        <fullName evidence="3">Polysaccharide lyase-like protein Cthe_2159</fullName>
        <shortName evidence="3">PL-like protein Cthe_2159</shortName>
    </alternativeName>
</protein>
<comment type="function">
    <text evidence="2">Binds cellulosic and pectic substrates. Displays no enzyme activity (in vitro).</text>
</comment>
<comment type="subunit">
    <text evidence="2">Monomer.</text>
</comment>
<comment type="subcellular location">
    <subcellularLocation>
        <location evidence="1">Cell membrane</location>
        <topology evidence="1 4">Lipid-anchor</topology>
    </subcellularLocation>
</comment>
<reference evidence="6" key="1">
    <citation type="submission" date="2007-02" db="EMBL/GenBank/DDBJ databases">
        <title>Complete sequence of Clostridium thermocellum ATCC 27405.</title>
        <authorList>
            <consortium name="US DOE Joint Genome Institute"/>
            <person name="Copeland A."/>
            <person name="Lucas S."/>
            <person name="Lapidus A."/>
            <person name="Barry K."/>
            <person name="Detter J.C."/>
            <person name="Glavina del Rio T."/>
            <person name="Hammon N."/>
            <person name="Israni S."/>
            <person name="Dalin E."/>
            <person name="Tice H."/>
            <person name="Pitluck S."/>
            <person name="Chertkov O."/>
            <person name="Brettin T."/>
            <person name="Bruce D."/>
            <person name="Han C."/>
            <person name="Tapia R."/>
            <person name="Gilna P."/>
            <person name="Schmutz J."/>
            <person name="Larimer F."/>
            <person name="Land M."/>
            <person name="Hauser L."/>
            <person name="Kyrpides N."/>
            <person name="Mikhailova N."/>
            <person name="Wu J.H.D."/>
            <person name="Newcomb M."/>
            <person name="Richardson P."/>
        </authorList>
    </citation>
    <scope>NUCLEOTIDE SEQUENCE [LARGE SCALE GENOMIC DNA]</scope>
    <source>
        <strain evidence="6">ATCC 27405 / DSM 1237 / JCM 9322 / NBRC 103400 / NCIMB 10682 / NRRL B-4536 / VPI 7372</strain>
    </source>
</reference>
<reference evidence="7 8" key="2">
    <citation type="journal article" date="2014" name="Acta Crystallogr. D">
        <title>A new family of beta-helix proteins with similarities to the polysaccharide lyases.</title>
        <authorList>
            <person name="Close D.W."/>
            <person name="D'Angelo S."/>
            <person name="Bradbury A.R."/>
        </authorList>
    </citation>
    <scope>X-RAY CRYSTALLOGRAPHY (1.80 ANGSTROMS) OF 2-286 OF GLY-199/GLY-213 MUTANT IN COMPLEX WITH CALCIUM</scope>
    <scope>FUNCTION</scope>
    <scope>SUBUNIT</scope>
    <source>
        <strain evidence="3">ATCC 27405 / DSM 1237 / JCM 9322 / NBRC 103400 / NCIMB 10682 / NRRL B-4536 / VPI 7372</strain>
    </source>
</reference>
<organism evidence="5">
    <name type="scientific">Acetivibrio thermocellus (strain ATCC 27405 / DSM 1237 / JCM 9322 / NBRC 103400 / NCIMB 10682 / NRRL B-4536 / VPI 7372)</name>
    <name type="common">Clostridium thermocellum</name>
    <dbReference type="NCBI Taxonomy" id="203119"/>
    <lineage>
        <taxon>Bacteria</taxon>
        <taxon>Bacillati</taxon>
        <taxon>Bacillota</taxon>
        <taxon>Clostridia</taxon>
        <taxon>Eubacteriales</taxon>
        <taxon>Oscillospiraceae</taxon>
        <taxon>Acetivibrio</taxon>
    </lineage>
</organism>